<organismHost>
    <name type="scientific">Acanthamoeba polyphaga</name>
    <name type="common">Amoeba</name>
    <dbReference type="NCBI Taxonomy" id="5757"/>
</organismHost>
<protein>
    <recommendedName>
        <fullName>Putative ariadne-like RING finger protein R811</fullName>
    </recommendedName>
</protein>
<keyword id="KW-0479">Metal-binding</keyword>
<keyword id="KW-1185">Reference proteome</keyword>
<keyword id="KW-0677">Repeat</keyword>
<keyword id="KW-0808">Transferase</keyword>
<keyword id="KW-0833">Ubl conjugation pathway</keyword>
<keyword id="KW-0862">Zinc</keyword>
<keyword id="KW-0863">Zinc-finger</keyword>
<feature type="chain" id="PRO_0000249867" description="Putative ariadne-like RING finger protein R811">
    <location>
        <begin position="1"/>
        <end position="990"/>
    </location>
</feature>
<feature type="domain" description="VWFA" evidence="1">
    <location>
        <begin position="8"/>
        <end position="201"/>
    </location>
</feature>
<feature type="zinc finger region" description="RING-type 1" evidence="2">
    <location>
        <begin position="801"/>
        <end position="854"/>
    </location>
</feature>
<feature type="zinc finger region" description="IBR-type" evidence="2">
    <location>
        <begin position="855"/>
        <end position="903"/>
    </location>
</feature>
<feature type="zinc finger region" description="RING-type 2; atypical" evidence="2">
    <location>
        <begin position="930"/>
        <end position="961"/>
    </location>
</feature>
<feature type="region of interest" description="TRIAD supradomain" evidence="2">
    <location>
        <begin position="797"/>
        <end position="990"/>
    </location>
</feature>
<feature type="active site" evidence="2">
    <location>
        <position position="945"/>
    </location>
</feature>
<feature type="binding site" evidence="2">
    <location>
        <position position="801"/>
    </location>
    <ligand>
        <name>Zn(2+)</name>
        <dbReference type="ChEBI" id="CHEBI:29105"/>
        <label>1</label>
    </ligand>
</feature>
<feature type="binding site" evidence="2">
    <location>
        <position position="804"/>
    </location>
    <ligand>
        <name>Zn(2+)</name>
        <dbReference type="ChEBI" id="CHEBI:29105"/>
        <label>1</label>
    </ligand>
</feature>
<feature type="binding site" evidence="2">
    <location>
        <position position="827"/>
    </location>
    <ligand>
        <name>Zn(2+)</name>
        <dbReference type="ChEBI" id="CHEBI:29105"/>
        <label>1</label>
    </ligand>
</feature>
<feature type="binding site" evidence="2">
    <location>
        <position position="830"/>
    </location>
    <ligand>
        <name>Zn(2+)</name>
        <dbReference type="ChEBI" id="CHEBI:29105"/>
        <label>1</label>
    </ligand>
</feature>
<feature type="binding site" evidence="2">
    <location>
        <position position="930"/>
    </location>
    <ligand>
        <name>Zn(2+)</name>
        <dbReference type="ChEBI" id="CHEBI:29105"/>
        <label>2</label>
    </ligand>
</feature>
<feature type="binding site" evidence="2">
    <location>
        <position position="935"/>
    </location>
    <ligand>
        <name>Zn(2+)</name>
        <dbReference type="ChEBI" id="CHEBI:29105"/>
        <label>2</label>
    </ligand>
</feature>
<feature type="binding site" evidence="2">
    <location>
        <position position="950"/>
    </location>
    <ligand>
        <name>Zn(2+)</name>
        <dbReference type="ChEBI" id="CHEBI:29105"/>
        <label>2</label>
    </ligand>
</feature>
<feature type="binding site" evidence="2">
    <location>
        <position position="953"/>
    </location>
    <ligand>
        <name>Zn(2+)</name>
        <dbReference type="ChEBI" id="CHEBI:29105"/>
        <label>2</label>
    </ligand>
</feature>
<accession>Q5UQ35</accession>
<reference key="1">
    <citation type="journal article" date="2004" name="Science">
        <title>The 1.2-megabase genome sequence of Mimivirus.</title>
        <authorList>
            <person name="Raoult D."/>
            <person name="Audic S."/>
            <person name="Robert C."/>
            <person name="Abergel C."/>
            <person name="Renesto P."/>
            <person name="Ogata H."/>
            <person name="La Scola B."/>
            <person name="Susan M."/>
            <person name="Claverie J.-M."/>
        </authorList>
    </citation>
    <scope>NUCLEOTIDE SEQUENCE [LARGE SCALE GENOMIC DNA]</scope>
    <source>
        <strain>Rowbotham-Bradford</strain>
    </source>
</reference>
<dbReference type="EMBL" id="AY653733">
    <property type="protein sequence ID" value="AAV51071.1"/>
    <property type="molecule type" value="Genomic_DNA"/>
</dbReference>
<dbReference type="SMR" id="Q5UQ35"/>
<dbReference type="KEGG" id="vg:9925474"/>
<dbReference type="OrthoDB" id="597at10239"/>
<dbReference type="Proteomes" id="UP000001134">
    <property type="component" value="Genome"/>
</dbReference>
<dbReference type="GO" id="GO:0004674">
    <property type="term" value="F:protein serine/threonine kinase activity"/>
    <property type="evidence" value="ECO:0007669"/>
    <property type="project" value="TreeGrafter"/>
</dbReference>
<dbReference type="GO" id="GO:0008270">
    <property type="term" value="F:zinc ion binding"/>
    <property type="evidence" value="ECO:0007669"/>
    <property type="project" value="UniProtKB-KW"/>
</dbReference>
<dbReference type="Gene3D" id="1.20.120.1750">
    <property type="match status" value="1"/>
</dbReference>
<dbReference type="Gene3D" id="3.40.50.410">
    <property type="entry name" value="von Willebrand factor, type A domain"/>
    <property type="match status" value="1"/>
</dbReference>
<dbReference type="InterPro" id="IPR056861">
    <property type="entry name" value="HMCN1-like_VWA"/>
</dbReference>
<dbReference type="InterPro" id="IPR036280">
    <property type="entry name" value="Multihaem_cyt_sf"/>
</dbReference>
<dbReference type="InterPro" id="IPR052969">
    <property type="entry name" value="Thr-specific_kinase-like"/>
</dbReference>
<dbReference type="InterPro" id="IPR044066">
    <property type="entry name" value="TRIAD_supradom"/>
</dbReference>
<dbReference type="InterPro" id="IPR002035">
    <property type="entry name" value="VWF_A"/>
</dbReference>
<dbReference type="InterPro" id="IPR036465">
    <property type="entry name" value="vWFA_dom_sf"/>
</dbReference>
<dbReference type="InterPro" id="IPR001841">
    <property type="entry name" value="Znf_RING"/>
</dbReference>
<dbReference type="PANTHER" id="PTHR47763">
    <property type="entry name" value="ALPHA-PROTEIN KINASE VWKA"/>
    <property type="match status" value="1"/>
</dbReference>
<dbReference type="PANTHER" id="PTHR47763:SF1">
    <property type="entry name" value="DUF659 DOMAIN-CONTAINING PROTEIN"/>
    <property type="match status" value="1"/>
</dbReference>
<dbReference type="Pfam" id="PF22191">
    <property type="entry name" value="IBR_1"/>
    <property type="match status" value="1"/>
</dbReference>
<dbReference type="Pfam" id="PF25106">
    <property type="entry name" value="VWA_4"/>
    <property type="match status" value="1"/>
</dbReference>
<dbReference type="SUPFAM" id="SSF48695">
    <property type="entry name" value="Multiheme cytochromes"/>
    <property type="match status" value="1"/>
</dbReference>
<dbReference type="SUPFAM" id="SSF57850">
    <property type="entry name" value="RING/U-box"/>
    <property type="match status" value="1"/>
</dbReference>
<dbReference type="SUPFAM" id="SSF53300">
    <property type="entry name" value="vWA-like"/>
    <property type="match status" value="1"/>
</dbReference>
<dbReference type="PROSITE" id="PS51873">
    <property type="entry name" value="TRIAD"/>
    <property type="match status" value="1"/>
</dbReference>
<dbReference type="PROSITE" id="PS50234">
    <property type="entry name" value="VWFA"/>
    <property type="match status" value="1"/>
</dbReference>
<dbReference type="PROSITE" id="PS50089">
    <property type="entry name" value="ZF_RING_2"/>
    <property type="match status" value="1"/>
</dbReference>
<organism>
    <name type="scientific">Acanthamoeba polyphaga mimivirus</name>
    <name type="common">APMV</name>
    <dbReference type="NCBI Taxonomy" id="212035"/>
    <lineage>
        <taxon>Viruses</taxon>
        <taxon>Varidnaviria</taxon>
        <taxon>Bamfordvirae</taxon>
        <taxon>Nucleocytoviricota</taxon>
        <taxon>Megaviricetes</taxon>
        <taxon>Imitervirales</taxon>
        <taxon>Mimiviridae</taxon>
        <taxon>Megamimivirinae</taxon>
        <taxon>Mimivirus</taxon>
        <taxon>Mimivirus bradfordmassiliense</taxon>
    </lineage>
</organism>
<gene>
    <name type="ordered locus">MIMI_R811</name>
</gene>
<evidence type="ECO:0000255" key="1">
    <source>
        <dbReference type="PROSITE-ProRule" id="PRU00219"/>
    </source>
</evidence>
<evidence type="ECO:0000255" key="2">
    <source>
        <dbReference type="PROSITE-ProRule" id="PRU01221"/>
    </source>
</evidence>
<name>YR811_MIMIV</name>
<sequence>MDNQAVVDLAIVVDATGSMGTFLSSLSESLQQIVQIIDITNVIQNINIIMYRDYCDSVITASSGWVSKIDDLIPFIRGLRASGGGDTPEAGKTAANNLLDVVKNNTIVIWYADAPPHHKSNARDNFAREINTLIGSDKIFDWIELCDTLAARNIIVYPIINRHHFDTSSFYVAMSTITGGKTLYLESTNEKIITQTTIKLLLSLMGCDNEFKSGVKELVYGSEFNRSSILDENNNAGYLPGTRSSILVNTVDLQVQTHPWLITNLRSLVSLFNADSHYKDKIFAVFKSLMKPTSVLSLTYNTIFATFWRLICRTYDDPRKEVLKEQMSVVLENLKKTNREDHVVVTEWISDSYNQTYEVNDIIKTKAVSKVPALVLDTTRFYLPQEILELSRTCNAKVLSTVVDMLSSIRLIEKEEDLPKTNEQELDSKGRPIPLKYIPLSLPNKYLFSILPHLIAPGSNFSLRPSMILATVAYITNNQILKDRAKNHLEYHKGKWIDQSLPENYTGGFINLMLRVPEFLTDEEISFFKFYQKVFGLLINGSTELDIDMPFTPYKKVCNDFKRECDHCHHIRSFTLLTIDDDGKYKCGLCHSPADDDTDTLNRVYTIISCDTPGETGMTISKDTTLGPSSKEHQDDYHSVYLECKSCLCHYALVNVDKMNVTPKCYGCRFDVYLPNVKCIICTNKYVDPAKIYSDNSETFVCPQCVSDPRSSIDILKVKFKDIYLQNKSTIHSLVGFEMPSDINVFGGHSIFSIKDKINILDHTENPTSLVFNRKFMLNAPIVIIEMLKWINSGSAEKGLCMICFNEFSKSNLRQICGRKVCQSVACYDCMKSWYGENKVGDLIHVNALTCPFCKQCPMFNILAAFNRQVCAMVRTNNSFDIDWWYGWCLKCFQPKKVVEKECSEDAPQLGGKFICEECSNVKPENSKECPNSLCKIPIIKDGGCNHMECTACKKHFCWLCANVSYETSEETYDHLYKIHGGAFEYDQDD</sequence>
<proteinExistence type="predicted"/>